<comment type="function">
    <text evidence="1">Regulates the transcription of the arc operon, involved in arginine catabolism.</text>
</comment>
<comment type="pathway">
    <text>Amino-acid degradation; L-arginine degradation via ADI pathway.</text>
</comment>
<comment type="subcellular location">
    <subcellularLocation>
        <location evidence="1">Cytoplasm</location>
    </subcellularLocation>
</comment>
<comment type="similarity">
    <text evidence="2">Belongs to the ArgR family.</text>
</comment>
<accession>Q73E88</accession>
<keyword id="KW-0056">Arginine metabolism</keyword>
<keyword id="KW-0963">Cytoplasm</keyword>
<keyword id="KW-0238">DNA-binding</keyword>
<keyword id="KW-0804">Transcription</keyword>
<keyword id="KW-0805">Transcription regulation</keyword>
<reference key="1">
    <citation type="journal article" date="2004" name="Nucleic Acids Res.">
        <title>The genome sequence of Bacillus cereus ATCC 10987 reveals metabolic adaptations and a large plasmid related to Bacillus anthracis pXO1.</title>
        <authorList>
            <person name="Rasko D.A."/>
            <person name="Ravel J."/>
            <person name="Oekstad O.A."/>
            <person name="Helgason E."/>
            <person name="Cer R.Z."/>
            <person name="Jiang L."/>
            <person name="Shores K.A."/>
            <person name="Fouts D.E."/>
            <person name="Tourasse N.J."/>
            <person name="Angiuoli S.V."/>
            <person name="Kolonay J.F."/>
            <person name="Nelson W.C."/>
            <person name="Kolstoe A.-B."/>
            <person name="Fraser C.M."/>
            <person name="Read T.D."/>
        </authorList>
    </citation>
    <scope>NUCLEOTIDE SEQUENCE [LARGE SCALE GENOMIC DNA]</scope>
    <source>
        <strain>ATCC 10987 / NRS 248</strain>
    </source>
</reference>
<evidence type="ECO:0000250" key="1"/>
<evidence type="ECO:0000305" key="2"/>
<organism>
    <name type="scientific">Bacillus cereus (strain ATCC 10987 / NRS 248)</name>
    <dbReference type="NCBI Taxonomy" id="222523"/>
    <lineage>
        <taxon>Bacteria</taxon>
        <taxon>Bacillati</taxon>
        <taxon>Bacillota</taxon>
        <taxon>Bacilli</taxon>
        <taxon>Bacillales</taxon>
        <taxon>Bacillaceae</taxon>
        <taxon>Bacillus</taxon>
        <taxon>Bacillus cereus group</taxon>
    </lineage>
</organism>
<sequence>MKKEKRQRLIKQFVKEYEIEKQERLVELLAKKDVLVTQATVSRDIRELNVTKVPSQEGLMIYKIFSEEHLQTDIKLKKKLREVVVKIDCVDQLMVIKTLPGNAHVIGVLFDELDWKEKIGCICGNDTCLIISQSKSDREILEERLNLII</sequence>
<gene>
    <name type="primary">argR1</name>
    <name type="ordered locus">BCE_0471</name>
</gene>
<feature type="chain" id="PRO_0000205060" description="Arginine regulator">
    <location>
        <begin position="1"/>
        <end position="149"/>
    </location>
</feature>
<protein>
    <recommendedName>
        <fullName>Arginine regulator</fullName>
    </recommendedName>
</protein>
<proteinExistence type="inferred from homology"/>
<dbReference type="EMBL" id="AE017194">
    <property type="protein sequence ID" value="AAS39406.1"/>
    <property type="molecule type" value="Genomic_DNA"/>
</dbReference>
<dbReference type="SMR" id="Q73E88"/>
<dbReference type="KEGG" id="bca:BCE_0471"/>
<dbReference type="HOGENOM" id="CLU_097103_3_0_9"/>
<dbReference type="UniPathway" id="UPA00254"/>
<dbReference type="Proteomes" id="UP000002527">
    <property type="component" value="Chromosome"/>
</dbReference>
<dbReference type="GO" id="GO:0005737">
    <property type="term" value="C:cytoplasm"/>
    <property type="evidence" value="ECO:0007669"/>
    <property type="project" value="UniProtKB-SubCell"/>
</dbReference>
<dbReference type="GO" id="GO:0034618">
    <property type="term" value="F:arginine binding"/>
    <property type="evidence" value="ECO:0007669"/>
    <property type="project" value="InterPro"/>
</dbReference>
<dbReference type="GO" id="GO:0003677">
    <property type="term" value="F:DNA binding"/>
    <property type="evidence" value="ECO:0007669"/>
    <property type="project" value="UniProtKB-KW"/>
</dbReference>
<dbReference type="GO" id="GO:0003700">
    <property type="term" value="F:DNA-binding transcription factor activity"/>
    <property type="evidence" value="ECO:0007669"/>
    <property type="project" value="UniProtKB-UniRule"/>
</dbReference>
<dbReference type="GO" id="GO:0019547">
    <property type="term" value="P:arginine catabolic process to ornithine"/>
    <property type="evidence" value="ECO:0007669"/>
    <property type="project" value="UniProtKB-UniPathway"/>
</dbReference>
<dbReference type="GO" id="GO:0051259">
    <property type="term" value="P:protein complex oligomerization"/>
    <property type="evidence" value="ECO:0007669"/>
    <property type="project" value="InterPro"/>
</dbReference>
<dbReference type="GO" id="GO:1900079">
    <property type="term" value="P:regulation of arginine biosynthetic process"/>
    <property type="evidence" value="ECO:0007669"/>
    <property type="project" value="UniProtKB-UniRule"/>
</dbReference>
<dbReference type="Gene3D" id="3.30.1360.40">
    <property type="match status" value="1"/>
</dbReference>
<dbReference type="Gene3D" id="1.10.10.10">
    <property type="entry name" value="Winged helix-like DNA-binding domain superfamily/Winged helix DNA-binding domain"/>
    <property type="match status" value="1"/>
</dbReference>
<dbReference type="HAMAP" id="MF_00173">
    <property type="entry name" value="Arg_repressor"/>
    <property type="match status" value="1"/>
</dbReference>
<dbReference type="InterPro" id="IPR001669">
    <property type="entry name" value="Arg_repress"/>
</dbReference>
<dbReference type="InterPro" id="IPR020899">
    <property type="entry name" value="Arg_repress_C"/>
</dbReference>
<dbReference type="InterPro" id="IPR036251">
    <property type="entry name" value="Arg_repress_C_sf"/>
</dbReference>
<dbReference type="InterPro" id="IPR020900">
    <property type="entry name" value="Arg_repress_DNA-bd"/>
</dbReference>
<dbReference type="InterPro" id="IPR036388">
    <property type="entry name" value="WH-like_DNA-bd_sf"/>
</dbReference>
<dbReference type="InterPro" id="IPR036390">
    <property type="entry name" value="WH_DNA-bd_sf"/>
</dbReference>
<dbReference type="NCBIfam" id="TIGR01529">
    <property type="entry name" value="argR_whole"/>
    <property type="match status" value="1"/>
</dbReference>
<dbReference type="PANTHER" id="PTHR34471">
    <property type="entry name" value="ARGININE REPRESSOR"/>
    <property type="match status" value="1"/>
</dbReference>
<dbReference type="PANTHER" id="PTHR34471:SF1">
    <property type="entry name" value="ARGININE REPRESSOR"/>
    <property type="match status" value="1"/>
</dbReference>
<dbReference type="Pfam" id="PF01316">
    <property type="entry name" value="Arg_repressor"/>
    <property type="match status" value="1"/>
</dbReference>
<dbReference type="Pfam" id="PF02863">
    <property type="entry name" value="Arg_repressor_C"/>
    <property type="match status" value="1"/>
</dbReference>
<dbReference type="PRINTS" id="PR01467">
    <property type="entry name" value="ARGREPRESSOR"/>
</dbReference>
<dbReference type="SUPFAM" id="SSF55252">
    <property type="entry name" value="C-terminal domain of arginine repressor"/>
    <property type="match status" value="1"/>
</dbReference>
<dbReference type="SUPFAM" id="SSF46785">
    <property type="entry name" value="Winged helix' DNA-binding domain"/>
    <property type="match status" value="1"/>
</dbReference>
<name>ARGR1_BACC1</name>